<dbReference type="EC" id="7.6.2.-" evidence="1"/>
<dbReference type="EMBL" id="AM167904">
    <property type="protein sequence ID" value="CAJ49136.1"/>
    <property type="molecule type" value="Genomic_DNA"/>
</dbReference>
<dbReference type="RefSeq" id="WP_012417200.1">
    <property type="nucleotide sequence ID" value="NC_010645.1"/>
</dbReference>
<dbReference type="SMR" id="Q2L219"/>
<dbReference type="STRING" id="360910.BAV1523"/>
<dbReference type="GeneID" id="92935412"/>
<dbReference type="KEGG" id="bav:BAV1523"/>
<dbReference type="eggNOG" id="COG1136">
    <property type="taxonomic scope" value="Bacteria"/>
</dbReference>
<dbReference type="HOGENOM" id="CLU_000604_1_22_4"/>
<dbReference type="OrthoDB" id="9802264at2"/>
<dbReference type="Proteomes" id="UP000001977">
    <property type="component" value="Chromosome"/>
</dbReference>
<dbReference type="GO" id="GO:0005886">
    <property type="term" value="C:plasma membrane"/>
    <property type="evidence" value="ECO:0007669"/>
    <property type="project" value="UniProtKB-SubCell"/>
</dbReference>
<dbReference type="GO" id="GO:0005524">
    <property type="term" value="F:ATP binding"/>
    <property type="evidence" value="ECO:0007669"/>
    <property type="project" value="UniProtKB-KW"/>
</dbReference>
<dbReference type="GO" id="GO:0016887">
    <property type="term" value="F:ATP hydrolysis activity"/>
    <property type="evidence" value="ECO:0007669"/>
    <property type="project" value="InterPro"/>
</dbReference>
<dbReference type="GO" id="GO:0022857">
    <property type="term" value="F:transmembrane transporter activity"/>
    <property type="evidence" value="ECO:0007669"/>
    <property type="project" value="TreeGrafter"/>
</dbReference>
<dbReference type="GO" id="GO:0044874">
    <property type="term" value="P:lipoprotein localization to outer membrane"/>
    <property type="evidence" value="ECO:0007669"/>
    <property type="project" value="TreeGrafter"/>
</dbReference>
<dbReference type="GO" id="GO:0089705">
    <property type="term" value="P:protein localization to outer membrane"/>
    <property type="evidence" value="ECO:0007669"/>
    <property type="project" value="TreeGrafter"/>
</dbReference>
<dbReference type="CDD" id="cd03255">
    <property type="entry name" value="ABC_MJ0796_LolCDE_FtsE"/>
    <property type="match status" value="1"/>
</dbReference>
<dbReference type="FunFam" id="3.40.50.300:FF:000230">
    <property type="entry name" value="Lipoprotein-releasing system ATP-binding protein LolD"/>
    <property type="match status" value="1"/>
</dbReference>
<dbReference type="Gene3D" id="3.40.50.300">
    <property type="entry name" value="P-loop containing nucleotide triphosphate hydrolases"/>
    <property type="match status" value="1"/>
</dbReference>
<dbReference type="InterPro" id="IPR003593">
    <property type="entry name" value="AAA+_ATPase"/>
</dbReference>
<dbReference type="InterPro" id="IPR003439">
    <property type="entry name" value="ABC_transporter-like_ATP-bd"/>
</dbReference>
<dbReference type="InterPro" id="IPR017871">
    <property type="entry name" value="ABC_transporter-like_CS"/>
</dbReference>
<dbReference type="InterPro" id="IPR015854">
    <property type="entry name" value="ABC_transpr_LolD-like"/>
</dbReference>
<dbReference type="InterPro" id="IPR017911">
    <property type="entry name" value="MacB-like_ATP-bd"/>
</dbReference>
<dbReference type="InterPro" id="IPR027417">
    <property type="entry name" value="P-loop_NTPase"/>
</dbReference>
<dbReference type="PANTHER" id="PTHR24220">
    <property type="entry name" value="IMPORT ATP-BINDING PROTEIN"/>
    <property type="match status" value="1"/>
</dbReference>
<dbReference type="PANTHER" id="PTHR24220:SF689">
    <property type="entry name" value="LIPOPROTEIN-RELEASING SYSTEM ATP-BINDING PROTEIN LOLD"/>
    <property type="match status" value="1"/>
</dbReference>
<dbReference type="Pfam" id="PF00005">
    <property type="entry name" value="ABC_tran"/>
    <property type="match status" value="1"/>
</dbReference>
<dbReference type="SMART" id="SM00382">
    <property type="entry name" value="AAA"/>
    <property type="match status" value="1"/>
</dbReference>
<dbReference type="SUPFAM" id="SSF52540">
    <property type="entry name" value="P-loop containing nucleoside triphosphate hydrolases"/>
    <property type="match status" value="1"/>
</dbReference>
<dbReference type="PROSITE" id="PS00211">
    <property type="entry name" value="ABC_TRANSPORTER_1"/>
    <property type="match status" value="1"/>
</dbReference>
<dbReference type="PROSITE" id="PS50893">
    <property type="entry name" value="ABC_TRANSPORTER_2"/>
    <property type="match status" value="1"/>
</dbReference>
<dbReference type="PROSITE" id="PS51244">
    <property type="entry name" value="LOLD"/>
    <property type="match status" value="1"/>
</dbReference>
<evidence type="ECO:0000255" key="1">
    <source>
        <dbReference type="HAMAP-Rule" id="MF_01708"/>
    </source>
</evidence>
<sequence length="230" mass="24749">MTDTSLQAALRAEHLSKVYDEGPARIQVLDDVSLTVARGEMVAIVGASGSGKSTLLHILGLLDVPTSGSLVVDGTATEGLSEARKSAVRNRSLGFVYQFHHLLPEFSALDNVAMPLIVRRMDRDQARLQAREVLGLVGLAAREGHYPGQLSGGERQRVALARALVTRPACVLADEPTGNLDRQTAQNMFELLSRVNRESGTAFAIVTHDPELAARADRQLHMANGRLLPG</sequence>
<protein>
    <recommendedName>
        <fullName evidence="1">Lipoprotein-releasing system ATP-binding protein LolD</fullName>
        <ecNumber evidence="1">7.6.2.-</ecNumber>
    </recommendedName>
</protein>
<keyword id="KW-0067">ATP-binding</keyword>
<keyword id="KW-0997">Cell inner membrane</keyword>
<keyword id="KW-1003">Cell membrane</keyword>
<keyword id="KW-0472">Membrane</keyword>
<keyword id="KW-0547">Nucleotide-binding</keyword>
<keyword id="KW-1185">Reference proteome</keyword>
<keyword id="KW-1278">Translocase</keyword>
<keyword id="KW-0813">Transport</keyword>
<comment type="function">
    <text evidence="1">Part of the ABC transporter complex LolCDE involved in the translocation of mature outer membrane-directed lipoproteins, from the inner membrane to the periplasmic chaperone, LolA. Responsible for the formation of the LolA-lipoprotein complex in an ATP-dependent manner.</text>
</comment>
<comment type="subunit">
    <text evidence="1">The complex is composed of two ATP-binding proteins (LolD) and two transmembrane proteins (LolC and LolE).</text>
</comment>
<comment type="subcellular location">
    <subcellularLocation>
        <location evidence="1">Cell inner membrane</location>
        <topology evidence="1">Peripheral membrane protein</topology>
    </subcellularLocation>
</comment>
<comment type="similarity">
    <text evidence="1">Belongs to the ABC transporter superfamily. Lipoprotein translocase (TC 3.A.1.125) family.</text>
</comment>
<feature type="chain" id="PRO_0000272062" description="Lipoprotein-releasing system ATP-binding protein LolD">
    <location>
        <begin position="1"/>
        <end position="230"/>
    </location>
</feature>
<feature type="domain" description="ABC transporter" evidence="1">
    <location>
        <begin position="10"/>
        <end position="228"/>
    </location>
</feature>
<feature type="binding site" evidence="1">
    <location>
        <begin position="46"/>
        <end position="53"/>
    </location>
    <ligand>
        <name>ATP</name>
        <dbReference type="ChEBI" id="CHEBI:30616"/>
    </ligand>
</feature>
<gene>
    <name evidence="1" type="primary">lolD</name>
    <name type="ordered locus">BAV1523</name>
</gene>
<accession>Q2L219</accession>
<name>LOLD_BORA1</name>
<reference key="1">
    <citation type="journal article" date="2006" name="J. Bacteriol.">
        <title>Comparison of the genome sequence of the poultry pathogen Bordetella avium with those of B. bronchiseptica, B. pertussis, and B. parapertussis reveals extensive diversity in surface structures associated with host interaction.</title>
        <authorList>
            <person name="Sebaihia M."/>
            <person name="Preston A."/>
            <person name="Maskell D.J."/>
            <person name="Kuzmiak H."/>
            <person name="Connell T.D."/>
            <person name="King N.D."/>
            <person name="Orndorff P.E."/>
            <person name="Miyamoto D.M."/>
            <person name="Thomson N.R."/>
            <person name="Harris D."/>
            <person name="Goble A."/>
            <person name="Lord A."/>
            <person name="Murphy L."/>
            <person name="Quail M.A."/>
            <person name="Rutter S."/>
            <person name="Squares R."/>
            <person name="Squares S."/>
            <person name="Woodward J."/>
            <person name="Parkhill J."/>
            <person name="Temple L.M."/>
        </authorList>
    </citation>
    <scope>NUCLEOTIDE SEQUENCE [LARGE SCALE GENOMIC DNA]</scope>
    <source>
        <strain>197N</strain>
    </source>
</reference>
<organism>
    <name type="scientific">Bordetella avium (strain 197N)</name>
    <dbReference type="NCBI Taxonomy" id="360910"/>
    <lineage>
        <taxon>Bacteria</taxon>
        <taxon>Pseudomonadati</taxon>
        <taxon>Pseudomonadota</taxon>
        <taxon>Betaproteobacteria</taxon>
        <taxon>Burkholderiales</taxon>
        <taxon>Alcaligenaceae</taxon>
        <taxon>Bordetella</taxon>
    </lineage>
</organism>
<proteinExistence type="inferred from homology"/>